<accession>Q8YHM9</accession>
<sequence length="103" mass="11208">MQKIRKGDSVVVLSGKDKGRKGEVLKVMPKDEQALVSGINIVKRHQRQTQTQEAGIISKEAPIHLSNLAIADPKDGKPTRVGFRVEDGKKVRVAKRSGALIDG</sequence>
<keyword id="KW-0687">Ribonucleoprotein</keyword>
<keyword id="KW-0689">Ribosomal protein</keyword>
<keyword id="KW-0694">RNA-binding</keyword>
<keyword id="KW-0699">rRNA-binding</keyword>
<feature type="chain" id="PRO_0000130631" description="Large ribosomal subunit protein uL24">
    <location>
        <begin position="1"/>
        <end position="103"/>
    </location>
</feature>
<evidence type="ECO:0000255" key="1">
    <source>
        <dbReference type="HAMAP-Rule" id="MF_01326"/>
    </source>
</evidence>
<evidence type="ECO:0000305" key="2"/>
<name>RL24_BRUME</name>
<protein>
    <recommendedName>
        <fullName evidence="1">Large ribosomal subunit protein uL24</fullName>
    </recommendedName>
    <alternativeName>
        <fullName evidence="2">50S ribosomal protein L24</fullName>
    </alternativeName>
</protein>
<comment type="function">
    <text evidence="1">One of two assembly initiator proteins, it binds directly to the 5'-end of the 23S rRNA, where it nucleates assembly of the 50S subunit.</text>
</comment>
<comment type="function">
    <text evidence="1">One of the proteins that surrounds the polypeptide exit tunnel on the outside of the subunit.</text>
</comment>
<comment type="subunit">
    <text evidence="1">Part of the 50S ribosomal subunit.</text>
</comment>
<comment type="similarity">
    <text evidence="1">Belongs to the universal ribosomal protein uL24 family.</text>
</comment>
<reference key="1">
    <citation type="journal article" date="2002" name="Proc. Natl. Acad. Sci. U.S.A.">
        <title>The genome sequence of the facultative intracellular pathogen Brucella melitensis.</title>
        <authorList>
            <person name="DelVecchio V.G."/>
            <person name="Kapatral V."/>
            <person name="Redkar R.J."/>
            <person name="Patra G."/>
            <person name="Mujer C."/>
            <person name="Los T."/>
            <person name="Ivanova N."/>
            <person name="Anderson I."/>
            <person name="Bhattacharyya A."/>
            <person name="Lykidis A."/>
            <person name="Reznik G."/>
            <person name="Jablonski L."/>
            <person name="Larsen N."/>
            <person name="D'Souza M."/>
            <person name="Bernal A."/>
            <person name="Mazur M."/>
            <person name="Goltsman E."/>
            <person name="Selkov E."/>
            <person name="Elzer P.H."/>
            <person name="Hagius S."/>
            <person name="O'Callaghan D."/>
            <person name="Letesson J.-J."/>
            <person name="Haselkorn R."/>
            <person name="Kyrpides N.C."/>
            <person name="Overbeek R."/>
        </authorList>
    </citation>
    <scope>NUCLEOTIDE SEQUENCE [LARGE SCALE GENOMIC DNA]</scope>
    <source>
        <strain>ATCC 23456 / CCUG 17765 / NCTC 10094 / 16M</strain>
    </source>
</reference>
<proteinExistence type="inferred from homology"/>
<dbReference type="EMBL" id="AE008917">
    <property type="protein sequence ID" value="AAL51949.1"/>
    <property type="molecule type" value="Genomic_DNA"/>
</dbReference>
<dbReference type="PIR" id="AB3348">
    <property type="entry name" value="AB3348"/>
</dbReference>
<dbReference type="RefSeq" id="WP_002964351.1">
    <property type="nucleotide sequence ID" value="NZ_GG703780.1"/>
</dbReference>
<dbReference type="SMR" id="Q8YHM9"/>
<dbReference type="GeneID" id="97533535"/>
<dbReference type="KEGG" id="bme:BMEI0768"/>
<dbReference type="KEGG" id="bmel:DK63_654"/>
<dbReference type="PATRIC" id="fig|224914.52.peg.685"/>
<dbReference type="eggNOG" id="COG0198">
    <property type="taxonomic scope" value="Bacteria"/>
</dbReference>
<dbReference type="PhylomeDB" id="Q8YHM9"/>
<dbReference type="Proteomes" id="UP000000419">
    <property type="component" value="Chromosome I"/>
</dbReference>
<dbReference type="GO" id="GO:1990904">
    <property type="term" value="C:ribonucleoprotein complex"/>
    <property type="evidence" value="ECO:0007669"/>
    <property type="project" value="UniProtKB-KW"/>
</dbReference>
<dbReference type="GO" id="GO:0005840">
    <property type="term" value="C:ribosome"/>
    <property type="evidence" value="ECO:0007669"/>
    <property type="project" value="UniProtKB-KW"/>
</dbReference>
<dbReference type="GO" id="GO:0019843">
    <property type="term" value="F:rRNA binding"/>
    <property type="evidence" value="ECO:0007669"/>
    <property type="project" value="UniProtKB-UniRule"/>
</dbReference>
<dbReference type="GO" id="GO:0003735">
    <property type="term" value="F:structural constituent of ribosome"/>
    <property type="evidence" value="ECO:0007669"/>
    <property type="project" value="InterPro"/>
</dbReference>
<dbReference type="GO" id="GO:0006412">
    <property type="term" value="P:translation"/>
    <property type="evidence" value="ECO:0007669"/>
    <property type="project" value="UniProtKB-UniRule"/>
</dbReference>
<dbReference type="CDD" id="cd06089">
    <property type="entry name" value="KOW_RPL26"/>
    <property type="match status" value="1"/>
</dbReference>
<dbReference type="FunFam" id="2.30.30.30:FF:000004">
    <property type="entry name" value="50S ribosomal protein L24"/>
    <property type="match status" value="1"/>
</dbReference>
<dbReference type="Gene3D" id="2.30.30.30">
    <property type="match status" value="1"/>
</dbReference>
<dbReference type="HAMAP" id="MF_01326_B">
    <property type="entry name" value="Ribosomal_uL24_B"/>
    <property type="match status" value="1"/>
</dbReference>
<dbReference type="InterPro" id="IPR005824">
    <property type="entry name" value="KOW"/>
</dbReference>
<dbReference type="InterPro" id="IPR014722">
    <property type="entry name" value="Rib_uL2_dom2"/>
</dbReference>
<dbReference type="InterPro" id="IPR003256">
    <property type="entry name" value="Ribosomal_uL24"/>
</dbReference>
<dbReference type="InterPro" id="IPR005825">
    <property type="entry name" value="Ribosomal_uL24_CS"/>
</dbReference>
<dbReference type="InterPro" id="IPR041988">
    <property type="entry name" value="Ribosomal_uL24_KOW"/>
</dbReference>
<dbReference type="InterPro" id="IPR008991">
    <property type="entry name" value="Translation_prot_SH3-like_sf"/>
</dbReference>
<dbReference type="NCBIfam" id="TIGR01079">
    <property type="entry name" value="rplX_bact"/>
    <property type="match status" value="1"/>
</dbReference>
<dbReference type="PANTHER" id="PTHR12903">
    <property type="entry name" value="MITOCHONDRIAL RIBOSOMAL PROTEIN L24"/>
    <property type="match status" value="1"/>
</dbReference>
<dbReference type="Pfam" id="PF00467">
    <property type="entry name" value="KOW"/>
    <property type="match status" value="1"/>
</dbReference>
<dbReference type="Pfam" id="PF17136">
    <property type="entry name" value="ribosomal_L24"/>
    <property type="match status" value="1"/>
</dbReference>
<dbReference type="SMART" id="SM00739">
    <property type="entry name" value="KOW"/>
    <property type="match status" value="1"/>
</dbReference>
<dbReference type="SUPFAM" id="SSF50104">
    <property type="entry name" value="Translation proteins SH3-like domain"/>
    <property type="match status" value="1"/>
</dbReference>
<dbReference type="PROSITE" id="PS01108">
    <property type="entry name" value="RIBOSOMAL_L24"/>
    <property type="match status" value="1"/>
</dbReference>
<organism>
    <name type="scientific">Brucella melitensis biotype 1 (strain ATCC 23456 / CCUG 17765 / NCTC 10094 / 16M)</name>
    <dbReference type="NCBI Taxonomy" id="224914"/>
    <lineage>
        <taxon>Bacteria</taxon>
        <taxon>Pseudomonadati</taxon>
        <taxon>Pseudomonadota</taxon>
        <taxon>Alphaproteobacteria</taxon>
        <taxon>Hyphomicrobiales</taxon>
        <taxon>Brucellaceae</taxon>
        <taxon>Brucella/Ochrobactrum group</taxon>
        <taxon>Brucella</taxon>
    </lineage>
</organism>
<gene>
    <name evidence="1" type="primary">rplX</name>
    <name type="ordered locus">BMEI0768</name>
</gene>